<sequence length="538" mass="59576">MRVNNLTPQDLKAYGINDVQDIVYNPSYDTLYQEELNPGLEGYERGVLTNLGAVAVDTGIFTGRSPKDKYIVRDDTTRDTLWWSDKGKGKNDNKPLSQETWQHLKGLVTHQLSGKRLFIVDAFCGANADTRLSVRFITEVAWQAHFVKNMFIRPTDEELVGFKPDFIVMNGAKCTNPQWKEQGLNSENFVAFNLTERIQLIGGTWYGGEMKKGMFSVMNYLLPLKGIASMHCSANVGEKGDVAVFFGLSGTGKTTLSTDPKRRLIGDDEHGWDDDGVFNFEGGCYAKTIKLSKEAEPEIYHAIRRDALLENVTVREDGTVDFDDGSKTENTRVSYPIYHIDNIVKPVSKAGHATKVIFLTADFGVLPPVSRLTANQTQYHFLSGFTAKLAGTERGVTEPTPTFSACFGAAFLTLHPTQYAEVLVKRMQAAGAQAYLVNTGWNGTGKRISIKDTRAIIDAILNGSLDNAETFRLPLFDLAIPTELPGVDTHILDPRNTYASPEQWQEKATALAKLFIENFEKYTDTPAGEALVSAGPKL</sequence>
<keyword id="KW-0067">ATP-binding</keyword>
<keyword id="KW-0106">Calcium</keyword>
<keyword id="KW-0963">Cytoplasm</keyword>
<keyword id="KW-0210">Decarboxylase</keyword>
<keyword id="KW-0312">Gluconeogenesis</keyword>
<keyword id="KW-0456">Lyase</keyword>
<keyword id="KW-0464">Manganese</keyword>
<keyword id="KW-0479">Metal-binding</keyword>
<keyword id="KW-0547">Nucleotide-binding</keyword>
<keyword id="KW-1185">Reference proteome</keyword>
<feature type="chain" id="PRO_0000203840" description="Phosphoenolpyruvate carboxykinase (ATP)">
    <location>
        <begin position="1"/>
        <end position="538"/>
    </location>
</feature>
<feature type="binding site" evidence="2">
    <location>
        <position position="64"/>
    </location>
    <ligand>
        <name>substrate</name>
    </ligand>
</feature>
<feature type="binding site" evidence="1">
    <location>
        <position position="149"/>
    </location>
    <ligand>
        <name>Ca(2+)</name>
        <dbReference type="ChEBI" id="CHEBI:29108"/>
    </ligand>
</feature>
<feature type="binding site" evidence="1">
    <location>
        <position position="151"/>
    </location>
    <ligand>
        <name>Ca(2+)</name>
        <dbReference type="ChEBI" id="CHEBI:29108"/>
    </ligand>
</feature>
<feature type="binding site" evidence="2">
    <location>
        <position position="206"/>
    </location>
    <ligand>
        <name>substrate</name>
    </ligand>
</feature>
<feature type="binding site" evidence="2">
    <location>
        <position position="212"/>
    </location>
    <ligand>
        <name>ATP</name>
        <dbReference type="ChEBI" id="CHEBI:30616"/>
    </ligand>
</feature>
<feature type="binding site" evidence="2">
    <location>
        <position position="212"/>
    </location>
    <ligand>
        <name>Mn(2+)</name>
        <dbReference type="ChEBI" id="CHEBI:29035"/>
    </ligand>
</feature>
<feature type="binding site" evidence="2">
    <location>
        <position position="212"/>
    </location>
    <ligand>
        <name>substrate</name>
    </ligand>
</feature>
<feature type="binding site" evidence="2">
    <location>
        <position position="231"/>
    </location>
    <ligand>
        <name>ATP</name>
        <dbReference type="ChEBI" id="CHEBI:30616"/>
    </ligand>
</feature>
<feature type="binding site" evidence="2">
    <location>
        <position position="231"/>
    </location>
    <ligand>
        <name>Mn(2+)</name>
        <dbReference type="ChEBI" id="CHEBI:29035"/>
    </ligand>
</feature>
<feature type="binding site" evidence="2">
    <location>
        <begin position="247"/>
        <end position="255"/>
    </location>
    <ligand>
        <name>ATP</name>
        <dbReference type="ChEBI" id="CHEBI:30616"/>
    </ligand>
</feature>
<feature type="binding site" evidence="2">
    <location>
        <position position="268"/>
    </location>
    <ligand>
        <name>Mn(2+)</name>
        <dbReference type="ChEBI" id="CHEBI:29035"/>
    </ligand>
</feature>
<feature type="binding site" evidence="2">
    <location>
        <position position="296"/>
    </location>
    <ligand>
        <name>ATP</name>
        <dbReference type="ChEBI" id="CHEBI:30616"/>
    </ligand>
</feature>
<feature type="binding site" evidence="2">
    <location>
        <position position="332"/>
    </location>
    <ligand>
        <name>ATP</name>
        <dbReference type="ChEBI" id="CHEBI:30616"/>
    </ligand>
</feature>
<feature type="binding site" evidence="2">
    <location>
        <position position="332"/>
    </location>
    <ligand>
        <name>substrate</name>
    </ligand>
</feature>
<feature type="binding site" evidence="2">
    <location>
        <begin position="447"/>
        <end position="448"/>
    </location>
    <ligand>
        <name>ATP</name>
        <dbReference type="ChEBI" id="CHEBI:30616"/>
    </ligand>
</feature>
<feature type="binding site" evidence="2">
    <location>
        <position position="453"/>
    </location>
    <ligand>
        <name>ATP</name>
        <dbReference type="ChEBI" id="CHEBI:30616"/>
    </ligand>
</feature>
<comment type="function">
    <text evidence="2 3">Involved in the gluconeogenesis. Catalyzes the conversion of oxaloacetate (OAA) to phosphoenolpyruvate (PEP) through direct phosphoryl transfer between the nucleoside triphosphate and OAA.</text>
</comment>
<comment type="catalytic activity">
    <reaction evidence="2">
        <text>oxaloacetate + ATP = phosphoenolpyruvate + ADP + CO2</text>
        <dbReference type="Rhea" id="RHEA:18617"/>
        <dbReference type="ChEBI" id="CHEBI:16452"/>
        <dbReference type="ChEBI" id="CHEBI:16526"/>
        <dbReference type="ChEBI" id="CHEBI:30616"/>
        <dbReference type="ChEBI" id="CHEBI:58702"/>
        <dbReference type="ChEBI" id="CHEBI:456216"/>
        <dbReference type="EC" id="4.1.1.49"/>
    </reaction>
</comment>
<comment type="cofactor">
    <cofactor evidence="2">
        <name>Mn(2+)</name>
        <dbReference type="ChEBI" id="CHEBI:29035"/>
    </cofactor>
    <text evidence="2">Binds 1 Mn(2+) ion per subunit.</text>
</comment>
<comment type="activity regulation">
    <text evidence="5">Allosterically activated by calcium.</text>
</comment>
<comment type="pathway">
    <text evidence="2">Carbohydrate biosynthesis; gluconeogenesis.</text>
</comment>
<comment type="subunit">
    <text evidence="2">Monomer.</text>
</comment>
<comment type="subcellular location">
    <subcellularLocation>
        <location evidence="2">Cytoplasm</location>
    </subcellularLocation>
</comment>
<comment type="similarity">
    <text evidence="2">Belongs to the phosphoenolpyruvate carboxykinase (ATP) family.</text>
</comment>
<comment type="sequence caution" evidence="4">
    <conflict type="frameshift">
        <sequence resource="EMBL" id="X12374"/>
    </conflict>
</comment>
<name>PCKA_SALTY</name>
<protein>
    <recommendedName>
        <fullName evidence="2">Phosphoenolpyruvate carboxykinase (ATP)</fullName>
        <shortName evidence="2">PCK</shortName>
        <shortName evidence="2">PEP carboxykinase</shortName>
        <shortName evidence="2">PEPCK</shortName>
        <ecNumber evidence="2">4.1.1.49</ecNumber>
    </recommendedName>
</protein>
<dbReference type="EC" id="4.1.1.49" evidence="2"/>
<dbReference type="EMBL" id="AE006468">
    <property type="protein sequence ID" value="AAL22362.1"/>
    <property type="molecule type" value="Genomic_DNA"/>
</dbReference>
<dbReference type="EMBL" id="X12374">
    <property type="status" value="NOT_ANNOTATED_CDS"/>
    <property type="molecule type" value="Genomic_DNA"/>
</dbReference>
<dbReference type="RefSeq" id="NP_462403.2">
    <property type="nucleotide sequence ID" value="NC_003197.2"/>
</dbReference>
<dbReference type="SMR" id="P41033"/>
<dbReference type="STRING" id="99287.STM3500"/>
<dbReference type="PaxDb" id="99287-STM3500"/>
<dbReference type="GeneID" id="1255023"/>
<dbReference type="KEGG" id="stm:STM3500"/>
<dbReference type="PATRIC" id="fig|99287.12.peg.3699"/>
<dbReference type="HOGENOM" id="CLU_018247_0_1_6"/>
<dbReference type="PhylomeDB" id="P41033"/>
<dbReference type="UniPathway" id="UPA00138"/>
<dbReference type="Proteomes" id="UP000001014">
    <property type="component" value="Chromosome"/>
</dbReference>
<dbReference type="GO" id="GO:0005829">
    <property type="term" value="C:cytosol"/>
    <property type="evidence" value="ECO:0000318"/>
    <property type="project" value="GO_Central"/>
</dbReference>
<dbReference type="GO" id="GO:0005524">
    <property type="term" value="F:ATP binding"/>
    <property type="evidence" value="ECO:0007669"/>
    <property type="project" value="UniProtKB-UniRule"/>
</dbReference>
<dbReference type="GO" id="GO:0046872">
    <property type="term" value="F:metal ion binding"/>
    <property type="evidence" value="ECO:0007669"/>
    <property type="project" value="UniProtKB-KW"/>
</dbReference>
<dbReference type="GO" id="GO:0004612">
    <property type="term" value="F:phosphoenolpyruvate carboxykinase (ATP) activity"/>
    <property type="evidence" value="ECO:0000318"/>
    <property type="project" value="GO_Central"/>
</dbReference>
<dbReference type="GO" id="GO:0006094">
    <property type="term" value="P:gluconeogenesis"/>
    <property type="evidence" value="ECO:0000318"/>
    <property type="project" value="GO_Central"/>
</dbReference>
<dbReference type="CDD" id="cd00484">
    <property type="entry name" value="PEPCK_ATP"/>
    <property type="match status" value="1"/>
</dbReference>
<dbReference type="FunFam" id="2.170.8.10:FF:000001">
    <property type="entry name" value="Phosphoenolpyruvate carboxykinase (ATP)"/>
    <property type="match status" value="1"/>
</dbReference>
<dbReference type="FunFam" id="3.40.449.10:FF:000001">
    <property type="entry name" value="Phosphoenolpyruvate carboxykinase (ATP)"/>
    <property type="match status" value="1"/>
</dbReference>
<dbReference type="Gene3D" id="3.90.228.20">
    <property type="match status" value="1"/>
</dbReference>
<dbReference type="Gene3D" id="3.40.449.10">
    <property type="entry name" value="Phosphoenolpyruvate Carboxykinase, domain 1"/>
    <property type="match status" value="1"/>
</dbReference>
<dbReference type="Gene3D" id="2.170.8.10">
    <property type="entry name" value="Phosphoenolpyruvate Carboxykinase, domain 2"/>
    <property type="match status" value="1"/>
</dbReference>
<dbReference type="HAMAP" id="MF_00453">
    <property type="entry name" value="PEPCK_ATP"/>
    <property type="match status" value="1"/>
</dbReference>
<dbReference type="InterPro" id="IPR001272">
    <property type="entry name" value="PEP_carboxykinase_ATP"/>
</dbReference>
<dbReference type="InterPro" id="IPR013035">
    <property type="entry name" value="PEP_carboxykinase_C"/>
</dbReference>
<dbReference type="InterPro" id="IPR008210">
    <property type="entry name" value="PEP_carboxykinase_N"/>
</dbReference>
<dbReference type="InterPro" id="IPR015994">
    <property type="entry name" value="PEPCK_ATP_CS"/>
</dbReference>
<dbReference type="NCBIfam" id="TIGR00224">
    <property type="entry name" value="pckA"/>
    <property type="match status" value="1"/>
</dbReference>
<dbReference type="NCBIfam" id="NF006819">
    <property type="entry name" value="PRK09344.1-1"/>
    <property type="match status" value="1"/>
</dbReference>
<dbReference type="NCBIfam" id="NF006820">
    <property type="entry name" value="PRK09344.1-2"/>
    <property type="match status" value="1"/>
</dbReference>
<dbReference type="NCBIfam" id="NF006821">
    <property type="entry name" value="PRK09344.1-3"/>
    <property type="match status" value="1"/>
</dbReference>
<dbReference type="PANTHER" id="PTHR30031:SF0">
    <property type="entry name" value="PHOSPHOENOLPYRUVATE CARBOXYKINASE (ATP)"/>
    <property type="match status" value="1"/>
</dbReference>
<dbReference type="PANTHER" id="PTHR30031">
    <property type="entry name" value="PHOSPHOENOLPYRUVATE CARBOXYKINASE ATP"/>
    <property type="match status" value="1"/>
</dbReference>
<dbReference type="Pfam" id="PF01293">
    <property type="entry name" value="PEPCK_ATP"/>
    <property type="match status" value="1"/>
</dbReference>
<dbReference type="PIRSF" id="PIRSF006294">
    <property type="entry name" value="PEP_crbxkin"/>
    <property type="match status" value="1"/>
</dbReference>
<dbReference type="SUPFAM" id="SSF68923">
    <property type="entry name" value="PEP carboxykinase N-terminal domain"/>
    <property type="match status" value="1"/>
</dbReference>
<dbReference type="SUPFAM" id="SSF53795">
    <property type="entry name" value="PEP carboxykinase-like"/>
    <property type="match status" value="1"/>
</dbReference>
<dbReference type="PROSITE" id="PS00532">
    <property type="entry name" value="PEPCK_ATP"/>
    <property type="match status" value="1"/>
</dbReference>
<accession>P41033</accession>
<evidence type="ECO:0000250" key="1"/>
<evidence type="ECO:0000255" key="2">
    <source>
        <dbReference type="HAMAP-Rule" id="MF_00453"/>
    </source>
</evidence>
<evidence type="ECO:0000269" key="3">
    <source>
    </source>
</evidence>
<evidence type="ECO:0000305" key="4"/>
<evidence type="ECO:0000305" key="5">
    <source>
    </source>
</evidence>
<organism>
    <name type="scientific">Salmonella typhimurium (strain LT2 / SGSC1412 / ATCC 700720)</name>
    <dbReference type="NCBI Taxonomy" id="99287"/>
    <lineage>
        <taxon>Bacteria</taxon>
        <taxon>Pseudomonadati</taxon>
        <taxon>Pseudomonadota</taxon>
        <taxon>Gammaproteobacteria</taxon>
        <taxon>Enterobacterales</taxon>
        <taxon>Enterobacteriaceae</taxon>
        <taxon>Salmonella</taxon>
    </lineage>
</organism>
<reference key="1">
    <citation type="journal article" date="2001" name="Nature">
        <title>Complete genome sequence of Salmonella enterica serovar Typhimurium LT2.</title>
        <authorList>
            <person name="McClelland M."/>
            <person name="Sanderson K.E."/>
            <person name="Spieth J."/>
            <person name="Clifton S.W."/>
            <person name="Latreille P."/>
            <person name="Courtney L."/>
            <person name="Porwollik S."/>
            <person name="Ali J."/>
            <person name="Dante M."/>
            <person name="Du F."/>
            <person name="Hou S."/>
            <person name="Layman D."/>
            <person name="Leonard S."/>
            <person name="Nguyen C."/>
            <person name="Scott K."/>
            <person name="Holmes A."/>
            <person name="Grewal N."/>
            <person name="Mulvaney E."/>
            <person name="Ryan E."/>
            <person name="Sun H."/>
            <person name="Florea L."/>
            <person name="Miller W."/>
            <person name="Stoneking T."/>
            <person name="Nhan M."/>
            <person name="Waterston R."/>
            <person name="Wilson R.K."/>
        </authorList>
    </citation>
    <scope>NUCLEOTIDE SEQUENCE [LARGE SCALE GENOMIC DNA]</scope>
    <source>
        <strain>LT2 / SGSC1412 / ATCC 700720</strain>
    </source>
</reference>
<reference key="2">
    <citation type="journal article" date="1988" name="J. Mol. Biol.">
        <title>Structure and expression of the ompB operon, the regulatory locus for the outer membrane porin regulon in Salmonella typhimurium LT-2.</title>
        <authorList>
            <person name="Lijestroem P."/>
            <person name="Laamanen I."/>
            <person name="Palva E.T."/>
        </authorList>
    </citation>
    <scope>NUCLEOTIDE SEQUENCE [GENOMIC DNA] OF 251-538</scope>
    <source>
        <strain>LT2</strain>
    </source>
</reference>
<reference key="3">
    <citation type="journal article" date="1990" name="J. Bacteriol.">
        <title>Sequence of the pckA gene of Escherichia coli K-12: relevance to genetic and allosteric regulation and homology of E. coli phosphoenolpyruvate carboxykinase with the enzymes from Trypanosoma brucei and Saccharomyces cerevisiae.</title>
        <authorList>
            <person name="Medina V."/>
            <person name="Pontarollo R."/>
            <person name="Glaeske D."/>
            <person name="Tabel H."/>
            <person name="Goldie H."/>
        </authorList>
    </citation>
    <scope>FUNCTION</scope>
    <scope>ACTIVITY REGULATION</scope>
</reference>
<proteinExistence type="inferred from homology"/>
<gene>
    <name evidence="2" type="primary">pckA</name>
    <name type="synonym">pck</name>
    <name type="ordered locus">STM3500</name>
</gene>